<comment type="function">
    <text evidence="1">Modulates the synthesis of GlmS, by affecting the processing and stability of the regulatory small RNA GlmZ. When glucosamine-6-phosphate (GlcN6P) concentrations are high in the cell, RapZ binds GlmZ and targets it to cleavage by RNase E. Consequently, GlmZ is inactivated and unable to activate GlmS synthesis. Under low GlcN6P concentrations, RapZ is sequestered and inactivated by an other regulatory small RNA, GlmY, preventing GlmZ degradation and leading to synthesis of GlmS.</text>
</comment>
<comment type="subunit">
    <text evidence="1">Homotrimer.</text>
</comment>
<comment type="similarity">
    <text evidence="1">Belongs to the RapZ-like family. RapZ subfamily.</text>
</comment>
<sequence length="284" mass="32523">MVLMIVSGRSGSGKSVALRALEDMGFYCVDNLPVVLLPELARSLADRNISAAVSIDVRNMPESPEIFEQAMKNLPAEFSPQLLFLDADRNTLIRRYSDTRRLHPLSSKNLSLESAIDEESDLLEPLRSRADLIVDTSEMSVHELAEMLRTRLLGKRERELTMVFESFGFKHGIPIDADYVFDVRFLPNPHWDPKLRPMTGLDKPVAAFLDRHTEVHNFIYQTRSYLELWLPMLETNNRSYLTVAIGCTGGKHRSVYIAEQLADYFRSRGKNVQSRHRTLEKRKS</sequence>
<name>RAPZ_KLEOX</name>
<proteinExistence type="inferred from homology"/>
<evidence type="ECO:0000255" key="1">
    <source>
        <dbReference type="HAMAP-Rule" id="MF_00636"/>
    </source>
</evidence>
<organism>
    <name type="scientific">Klebsiella oxytoca</name>
    <dbReference type="NCBI Taxonomy" id="571"/>
    <lineage>
        <taxon>Bacteria</taxon>
        <taxon>Pseudomonadati</taxon>
        <taxon>Pseudomonadota</taxon>
        <taxon>Gammaproteobacteria</taxon>
        <taxon>Enterobacterales</taxon>
        <taxon>Enterobacteriaceae</taxon>
        <taxon>Klebsiella/Raoultella group</taxon>
        <taxon>Klebsiella</taxon>
    </lineage>
</organism>
<dbReference type="EMBL" id="Z50803">
    <property type="protein sequence ID" value="CAA90684.1"/>
    <property type="molecule type" value="Genomic_DNA"/>
</dbReference>
<dbReference type="EMBL" id="X16335">
    <property type="protein sequence ID" value="CAA34393.1"/>
    <property type="molecule type" value="Genomic_DNA"/>
</dbReference>
<dbReference type="PIR" id="S60666">
    <property type="entry name" value="S60666"/>
</dbReference>
<dbReference type="RefSeq" id="WP_004106169.1">
    <property type="nucleotide sequence ID" value="NZ_WVTN01000004.1"/>
</dbReference>
<dbReference type="SMR" id="P17163"/>
<dbReference type="STRING" id="571.AB185_09955"/>
<dbReference type="GeneID" id="97393273"/>
<dbReference type="eggNOG" id="COG1660">
    <property type="taxonomic scope" value="Bacteria"/>
</dbReference>
<dbReference type="OrthoDB" id="9784461at2"/>
<dbReference type="GO" id="GO:0005524">
    <property type="term" value="F:ATP binding"/>
    <property type="evidence" value="ECO:0007669"/>
    <property type="project" value="UniProtKB-UniRule"/>
</dbReference>
<dbReference type="GO" id="GO:0005525">
    <property type="term" value="F:GTP binding"/>
    <property type="evidence" value="ECO:0007669"/>
    <property type="project" value="UniProtKB-UniRule"/>
</dbReference>
<dbReference type="GO" id="GO:0003723">
    <property type="term" value="F:RNA binding"/>
    <property type="evidence" value="ECO:0007669"/>
    <property type="project" value="UniProtKB-KW"/>
</dbReference>
<dbReference type="Gene3D" id="3.40.50.300">
    <property type="entry name" value="P-loop containing nucleotide triphosphate hydrolases"/>
    <property type="match status" value="1"/>
</dbReference>
<dbReference type="HAMAP" id="MF_00636">
    <property type="entry name" value="RapZ_like"/>
    <property type="match status" value="1"/>
</dbReference>
<dbReference type="InterPro" id="IPR027417">
    <property type="entry name" value="P-loop_NTPase"/>
</dbReference>
<dbReference type="InterPro" id="IPR005337">
    <property type="entry name" value="RapZ-like"/>
</dbReference>
<dbReference type="InterPro" id="IPR053930">
    <property type="entry name" value="RapZ-like_N"/>
</dbReference>
<dbReference type="InterPro" id="IPR053931">
    <property type="entry name" value="RapZ_C"/>
</dbReference>
<dbReference type="NCBIfam" id="NF003828">
    <property type="entry name" value="PRK05416.1"/>
    <property type="match status" value="1"/>
</dbReference>
<dbReference type="PANTHER" id="PTHR30448">
    <property type="entry name" value="RNASE ADAPTER PROTEIN RAPZ"/>
    <property type="match status" value="1"/>
</dbReference>
<dbReference type="PANTHER" id="PTHR30448:SF0">
    <property type="entry name" value="RNASE ADAPTER PROTEIN RAPZ"/>
    <property type="match status" value="1"/>
</dbReference>
<dbReference type="Pfam" id="PF22740">
    <property type="entry name" value="PapZ_C"/>
    <property type="match status" value="1"/>
</dbReference>
<dbReference type="Pfam" id="PF03668">
    <property type="entry name" value="RapZ-like_N"/>
    <property type="match status" value="1"/>
</dbReference>
<dbReference type="PIRSF" id="PIRSF005052">
    <property type="entry name" value="P-loopkin"/>
    <property type="match status" value="1"/>
</dbReference>
<dbReference type="SUPFAM" id="SSF52540">
    <property type="entry name" value="P-loop containing nucleoside triphosphate hydrolases"/>
    <property type="match status" value="1"/>
</dbReference>
<keyword id="KW-0067">ATP-binding</keyword>
<keyword id="KW-0342">GTP-binding</keyword>
<keyword id="KW-0547">Nucleotide-binding</keyword>
<keyword id="KW-0694">RNA-binding</keyword>
<protein>
    <recommendedName>
        <fullName evidence="1">RNase adapter protein RapZ</fullName>
    </recommendedName>
</protein>
<gene>
    <name evidence="1" type="primary">rapZ</name>
</gene>
<accession>P17163</accession>
<feature type="chain" id="PRO_0000107718" description="RNase adapter protein RapZ">
    <location>
        <begin position="1"/>
        <end position="284"/>
    </location>
</feature>
<feature type="region of interest" description="RNA-binding" evidence="1">
    <location>
        <begin position="266"/>
        <end position="284"/>
    </location>
</feature>
<feature type="binding site" evidence="1">
    <location>
        <begin position="8"/>
        <end position="15"/>
    </location>
    <ligand>
        <name>ATP</name>
        <dbReference type="ChEBI" id="CHEBI:30616"/>
    </ligand>
</feature>
<feature type="binding site" evidence="1">
    <location>
        <begin position="56"/>
        <end position="59"/>
    </location>
    <ligand>
        <name>GTP</name>
        <dbReference type="ChEBI" id="CHEBI:37565"/>
    </ligand>
</feature>
<reference key="1">
    <citation type="submission" date="1995-08" db="EMBL/GenBank/DDBJ databases">
        <title>Sequence and characterisation of distal genes in the Klebsiella pneumoniae rpoN operon.</title>
        <authorList>
            <person name="Merrick M.J."/>
            <person name="Taylor M."/>
        </authorList>
    </citation>
    <scope>NUCLEOTIDE SEQUENCE [GENOMIC DNA]</scope>
    <source>
        <strain>M5a1</strain>
    </source>
</reference>
<reference key="2">
    <citation type="journal article" date="1989" name="Mol. Microbiol.">
        <title>Mutations in genes downstream of the rpoN gene (encoding sigma 54) of Klebsiella pneumoniae affect expression from sigma 54-dependent promoters.</title>
        <authorList>
            <person name="Merrick M.J."/>
            <person name="Coppard J.R."/>
        </authorList>
    </citation>
    <scope>NUCLEOTIDE SEQUENCE [GENOMIC DNA] OF 1-193</scope>
    <source>
        <strain>M5a1</strain>
    </source>
</reference>